<sequence length="177" mass="19244">MEQFRGTTIVCVRRNGRVALGGDGQVTLGNTVMKGNARKVRRLYGDKVLAGFAGGTADAFTLFERFEGKLEKYSGNLTRAAVELAKDWRTERALRRLEALLAVADKETSLLITGNGDVIEPEDNLIAMGSGGPFAQAAARALLDNTELSAREIAERALNIAADICIYTNRHLTIEEM</sequence>
<proteinExistence type="inferred from homology"/>
<organism>
    <name type="scientific">Thioalkalivibrio sulfidiphilus (strain HL-EbGR7)</name>
    <dbReference type="NCBI Taxonomy" id="396588"/>
    <lineage>
        <taxon>Bacteria</taxon>
        <taxon>Pseudomonadati</taxon>
        <taxon>Pseudomonadota</taxon>
        <taxon>Gammaproteobacteria</taxon>
        <taxon>Chromatiales</taxon>
        <taxon>Ectothiorhodospiraceae</taxon>
        <taxon>Thioalkalivibrio</taxon>
    </lineage>
</organism>
<reference key="1">
    <citation type="journal article" date="2011" name="Stand. Genomic Sci.">
        <title>Complete genome sequence of 'Thioalkalivibrio sulfidophilus' HL-EbGr7.</title>
        <authorList>
            <person name="Muyzer G."/>
            <person name="Sorokin D.Y."/>
            <person name="Mavromatis K."/>
            <person name="Lapidus A."/>
            <person name="Clum A."/>
            <person name="Ivanova N."/>
            <person name="Pati A."/>
            <person name="d'Haeseleer P."/>
            <person name="Woyke T."/>
            <person name="Kyrpides N.C."/>
        </authorList>
    </citation>
    <scope>NUCLEOTIDE SEQUENCE [LARGE SCALE GENOMIC DNA]</scope>
    <source>
        <strain>HL-EbGR7</strain>
    </source>
</reference>
<accession>B8GTA0</accession>
<dbReference type="EC" id="3.4.25.2" evidence="1"/>
<dbReference type="EMBL" id="CP001339">
    <property type="protein sequence ID" value="ACL71160.1"/>
    <property type="molecule type" value="Genomic_DNA"/>
</dbReference>
<dbReference type="RefSeq" id="WP_012636649.1">
    <property type="nucleotide sequence ID" value="NC_011901.1"/>
</dbReference>
<dbReference type="SMR" id="B8GTA0"/>
<dbReference type="STRING" id="396588.Tgr7_0056"/>
<dbReference type="MEROPS" id="T01.006"/>
<dbReference type="KEGG" id="tgr:Tgr7_0056"/>
<dbReference type="eggNOG" id="COG5405">
    <property type="taxonomic scope" value="Bacteria"/>
</dbReference>
<dbReference type="HOGENOM" id="CLU_093872_1_0_6"/>
<dbReference type="OrthoDB" id="9804884at2"/>
<dbReference type="Proteomes" id="UP000002383">
    <property type="component" value="Chromosome"/>
</dbReference>
<dbReference type="GO" id="GO:0009376">
    <property type="term" value="C:HslUV protease complex"/>
    <property type="evidence" value="ECO:0007669"/>
    <property type="project" value="UniProtKB-UniRule"/>
</dbReference>
<dbReference type="GO" id="GO:0005839">
    <property type="term" value="C:proteasome core complex"/>
    <property type="evidence" value="ECO:0007669"/>
    <property type="project" value="InterPro"/>
</dbReference>
<dbReference type="GO" id="GO:0046872">
    <property type="term" value="F:metal ion binding"/>
    <property type="evidence" value="ECO:0007669"/>
    <property type="project" value="UniProtKB-KW"/>
</dbReference>
<dbReference type="GO" id="GO:0004298">
    <property type="term" value="F:threonine-type endopeptidase activity"/>
    <property type="evidence" value="ECO:0007669"/>
    <property type="project" value="UniProtKB-KW"/>
</dbReference>
<dbReference type="GO" id="GO:0051603">
    <property type="term" value="P:proteolysis involved in protein catabolic process"/>
    <property type="evidence" value="ECO:0007669"/>
    <property type="project" value="InterPro"/>
</dbReference>
<dbReference type="CDD" id="cd01913">
    <property type="entry name" value="protease_HslV"/>
    <property type="match status" value="1"/>
</dbReference>
<dbReference type="FunFam" id="3.60.20.10:FF:000002">
    <property type="entry name" value="ATP-dependent protease subunit HslV"/>
    <property type="match status" value="1"/>
</dbReference>
<dbReference type="Gene3D" id="3.60.20.10">
    <property type="entry name" value="Glutamine Phosphoribosylpyrophosphate, subunit 1, domain 1"/>
    <property type="match status" value="1"/>
</dbReference>
<dbReference type="HAMAP" id="MF_00248">
    <property type="entry name" value="HslV"/>
    <property type="match status" value="1"/>
</dbReference>
<dbReference type="InterPro" id="IPR022281">
    <property type="entry name" value="ATP-dep_Prtase_HsIV_su"/>
</dbReference>
<dbReference type="InterPro" id="IPR029055">
    <property type="entry name" value="Ntn_hydrolases_N"/>
</dbReference>
<dbReference type="InterPro" id="IPR001353">
    <property type="entry name" value="Proteasome_sua/b"/>
</dbReference>
<dbReference type="InterPro" id="IPR023333">
    <property type="entry name" value="Proteasome_suB-type"/>
</dbReference>
<dbReference type="NCBIfam" id="TIGR03692">
    <property type="entry name" value="ATP_dep_HslV"/>
    <property type="match status" value="1"/>
</dbReference>
<dbReference type="NCBIfam" id="NF003964">
    <property type="entry name" value="PRK05456.1"/>
    <property type="match status" value="1"/>
</dbReference>
<dbReference type="PANTHER" id="PTHR32194:SF0">
    <property type="entry name" value="ATP-DEPENDENT PROTEASE SUBUNIT HSLV"/>
    <property type="match status" value="1"/>
</dbReference>
<dbReference type="PANTHER" id="PTHR32194">
    <property type="entry name" value="METALLOPROTEASE TLDD"/>
    <property type="match status" value="1"/>
</dbReference>
<dbReference type="Pfam" id="PF00227">
    <property type="entry name" value="Proteasome"/>
    <property type="match status" value="1"/>
</dbReference>
<dbReference type="PIRSF" id="PIRSF039093">
    <property type="entry name" value="HslV"/>
    <property type="match status" value="1"/>
</dbReference>
<dbReference type="SUPFAM" id="SSF56235">
    <property type="entry name" value="N-terminal nucleophile aminohydrolases (Ntn hydrolases)"/>
    <property type="match status" value="1"/>
</dbReference>
<dbReference type="PROSITE" id="PS51476">
    <property type="entry name" value="PROTEASOME_BETA_2"/>
    <property type="match status" value="1"/>
</dbReference>
<keyword id="KW-0021">Allosteric enzyme</keyword>
<keyword id="KW-0963">Cytoplasm</keyword>
<keyword id="KW-0378">Hydrolase</keyword>
<keyword id="KW-0479">Metal-binding</keyword>
<keyword id="KW-0645">Protease</keyword>
<keyword id="KW-1185">Reference proteome</keyword>
<keyword id="KW-0915">Sodium</keyword>
<keyword id="KW-0888">Threonine protease</keyword>
<protein>
    <recommendedName>
        <fullName evidence="1">ATP-dependent protease subunit HslV</fullName>
        <ecNumber evidence="1">3.4.25.2</ecNumber>
    </recommendedName>
</protein>
<evidence type="ECO:0000255" key="1">
    <source>
        <dbReference type="HAMAP-Rule" id="MF_00248"/>
    </source>
</evidence>
<name>HSLV_THISH</name>
<comment type="function">
    <text evidence="1">Protease subunit of a proteasome-like degradation complex believed to be a general protein degrading machinery.</text>
</comment>
<comment type="catalytic activity">
    <reaction evidence="1">
        <text>ATP-dependent cleavage of peptide bonds with broad specificity.</text>
        <dbReference type="EC" id="3.4.25.2"/>
    </reaction>
</comment>
<comment type="activity regulation">
    <text evidence="1">Allosterically activated by HslU binding.</text>
</comment>
<comment type="subunit">
    <text evidence="1">A double ring-shaped homohexamer of HslV is capped on each side by a ring-shaped HslU homohexamer. The assembly of the HslU/HslV complex is dependent on binding of ATP.</text>
</comment>
<comment type="subcellular location">
    <subcellularLocation>
        <location evidence="1">Cytoplasm</location>
    </subcellularLocation>
</comment>
<comment type="similarity">
    <text evidence="1">Belongs to the peptidase T1B family. HslV subfamily.</text>
</comment>
<feature type="chain" id="PRO_1000125419" description="ATP-dependent protease subunit HslV">
    <location>
        <begin position="1"/>
        <end position="177"/>
    </location>
</feature>
<feature type="active site" evidence="1">
    <location>
        <position position="7"/>
    </location>
</feature>
<feature type="binding site" evidence="1">
    <location>
        <position position="162"/>
    </location>
    <ligand>
        <name>Na(+)</name>
        <dbReference type="ChEBI" id="CHEBI:29101"/>
    </ligand>
</feature>
<feature type="binding site" evidence="1">
    <location>
        <position position="165"/>
    </location>
    <ligand>
        <name>Na(+)</name>
        <dbReference type="ChEBI" id="CHEBI:29101"/>
    </ligand>
</feature>
<feature type="binding site" evidence="1">
    <location>
        <position position="168"/>
    </location>
    <ligand>
        <name>Na(+)</name>
        <dbReference type="ChEBI" id="CHEBI:29101"/>
    </ligand>
</feature>
<gene>
    <name evidence="1" type="primary">hslV</name>
    <name type="ordered locus">Tgr7_0056</name>
</gene>